<accession>A1ZA47</accession>
<accession>A1ZA48</accession>
<accession>A1ZA49</accession>
<accession>A8DYF3</accession>
<accession>B0EW00</accession>
<accession>Q4V6Y5</accession>
<accession>Q6NNA6</accession>
<accession>Q86NZ1</accession>
<accession>Q8IGJ7</accession>
<feature type="chain" id="PRO_0000401106" description="PDZ and LIM domain protein Zasp">
    <location>
        <begin position="1"/>
        <end position="2194"/>
    </location>
</feature>
<feature type="domain" description="PDZ" evidence="2">
    <location>
        <begin position="8"/>
        <end position="90"/>
    </location>
</feature>
<feature type="domain" description="LIM zinc-binding 1" evidence="1">
    <location>
        <begin position="280"/>
        <end position="339"/>
    </location>
</feature>
<feature type="domain" description="LIM zinc-binding 2" evidence="1">
    <location>
        <begin position="2018"/>
        <end position="2078"/>
    </location>
</feature>
<feature type="domain" description="LIM zinc-binding 3" evidence="1">
    <location>
        <begin position="2079"/>
        <end position="2138"/>
    </location>
</feature>
<feature type="domain" description="LIM zinc-binding 4" evidence="1">
    <location>
        <begin position="2139"/>
        <end position="2194"/>
    </location>
</feature>
<feature type="region of interest" description="Disordered" evidence="3">
    <location>
        <begin position="211"/>
        <end position="277"/>
    </location>
</feature>
<feature type="region of interest" description="Disordered" evidence="3">
    <location>
        <begin position="415"/>
        <end position="436"/>
    </location>
</feature>
<feature type="region of interest" description="Disordered" evidence="3">
    <location>
        <begin position="457"/>
        <end position="476"/>
    </location>
</feature>
<feature type="region of interest" description="Disordered" evidence="3">
    <location>
        <begin position="511"/>
        <end position="558"/>
    </location>
</feature>
<feature type="region of interest" description="Disordered" evidence="3">
    <location>
        <begin position="580"/>
        <end position="611"/>
    </location>
</feature>
<feature type="region of interest" description="Disordered" evidence="3">
    <location>
        <begin position="623"/>
        <end position="692"/>
    </location>
</feature>
<feature type="region of interest" description="Disordered" evidence="3">
    <location>
        <begin position="896"/>
        <end position="940"/>
    </location>
</feature>
<feature type="region of interest" description="Disordered" evidence="3">
    <location>
        <begin position="1223"/>
        <end position="1260"/>
    </location>
</feature>
<feature type="region of interest" description="Disordered" evidence="3">
    <location>
        <begin position="1297"/>
        <end position="1322"/>
    </location>
</feature>
<feature type="region of interest" description="Disordered" evidence="3">
    <location>
        <begin position="1550"/>
        <end position="1632"/>
    </location>
</feature>
<feature type="region of interest" description="Disordered" evidence="3">
    <location>
        <begin position="1646"/>
        <end position="1738"/>
    </location>
</feature>
<feature type="region of interest" description="Disordered" evidence="3">
    <location>
        <begin position="1815"/>
        <end position="1837"/>
    </location>
</feature>
<feature type="compositionally biased region" description="Low complexity" evidence="3">
    <location>
        <begin position="228"/>
        <end position="253"/>
    </location>
</feature>
<feature type="compositionally biased region" description="Low complexity" evidence="3">
    <location>
        <begin position="415"/>
        <end position="435"/>
    </location>
</feature>
<feature type="compositionally biased region" description="Low complexity" evidence="3">
    <location>
        <begin position="515"/>
        <end position="530"/>
    </location>
</feature>
<feature type="compositionally biased region" description="Polar residues" evidence="3">
    <location>
        <begin position="580"/>
        <end position="590"/>
    </location>
</feature>
<feature type="compositionally biased region" description="Polar residues" evidence="3">
    <location>
        <begin position="644"/>
        <end position="667"/>
    </location>
</feature>
<feature type="compositionally biased region" description="Low complexity" evidence="3">
    <location>
        <begin position="676"/>
        <end position="692"/>
    </location>
</feature>
<feature type="compositionally biased region" description="Polar residues" evidence="3">
    <location>
        <begin position="1598"/>
        <end position="1610"/>
    </location>
</feature>
<feature type="compositionally biased region" description="Low complexity" evidence="3">
    <location>
        <begin position="1616"/>
        <end position="1630"/>
    </location>
</feature>
<feature type="compositionally biased region" description="Low complexity" evidence="3">
    <location>
        <begin position="1646"/>
        <end position="1668"/>
    </location>
</feature>
<feature type="compositionally biased region" description="Low complexity" evidence="3">
    <location>
        <begin position="1699"/>
        <end position="1727"/>
    </location>
</feature>
<feature type="splice variant" id="VSP_040043" description="In isoform E and isoform G." evidence="6 7 8 9">
    <original>AFGNSHYEHDAPQQLQQPQQQYNQHQQHYHQQQQQQQSSTTRHVSAPVNSPKPPSTGGLPTGQNICTECERLIT</original>
    <variation>EPHSPANFYWTQSHAIGGNERRTPLHHQHQQPQQDERIGVPLQSNTLAPEATHRPSLPVAPKDNEEQARQDQQEQPDPRIIVLPICPGLQGPEYKAEMEAAAAALATDQDGRPRPLAASGHPACQLCGVGIV</variation>
    <location>
        <begin position="217"/>
        <end position="290"/>
    </location>
</feature>
<feature type="splice variant" id="VSP_040045" description="In isoform C." evidence="6">
    <original>P</original>
    <variation>PPESESSQELPLPPPPSPTQLLQYEAEQQVLPEPHMSTIQQPQQQQKLEHTRTHSSLSSISSGSSSSGVGGSGSGSGSGSGVGQSQQSYSSTLSLDRFGSPLHSRQTSGSSTSLEVALAAPGAGQGDNYTMTPPSPPPPPPPQAQSVTNYRLQAAQNENDMNTQNKSPNAYNQLLKEYSNKLQQQHHHNTTQHTTATTAPSLKHNNTAKPFAVAATSTPQQHLPHQQHQQQPLVAALTATLANQLKFNPHQ</variation>
    <location>
        <position position="391"/>
    </location>
</feature>
<feature type="splice variant" id="VSP_040046" description="In isoform I and isoform E." evidence="6 7 8">
    <location>
        <begin position="393"/>
        <end position="502"/>
    </location>
</feature>
<feature type="splice variant" id="VSP_040048" description="In isoform I." evidence="6 8">
    <original>GGEAVEELQ</original>
    <variation>VGYGYPYTY</variation>
    <location>
        <begin position="552"/>
        <end position="560"/>
    </location>
</feature>
<feature type="splice variant" id="VSP_040050" description="In isoform C, isoform E and isoform G." evidence="6 7 8 9">
    <original>GEAVEELQPEFEEEDCYEMDIEVALAASRQSQRGSSFTWPPPQDDSHLAPTAAPLYIPPPETQHVVVSNP</original>
    <variation>RNVRYQQQQQQQQQYNNQQKQQYRNSYPMGSNYSTPSQSPYITSNTNNYSSSNSYNNNNYSNYNNNNVYR</variation>
    <location>
        <begin position="553"/>
        <end position="622"/>
    </location>
</feature>
<feature type="splice variant" id="VSP_040051" description="In isoform I." evidence="6 8">
    <location>
        <begin position="561"/>
        <end position="2194"/>
    </location>
</feature>
<feature type="splice variant" id="VSP_040052" description="In isoform C, isoform E and isoform G." evidence="6 7 8 9">
    <location>
        <begin position="623"/>
        <end position="1984"/>
    </location>
</feature>
<organism>
    <name type="scientific">Drosophila melanogaster</name>
    <name type="common">Fruit fly</name>
    <dbReference type="NCBI Taxonomy" id="7227"/>
    <lineage>
        <taxon>Eukaryota</taxon>
        <taxon>Metazoa</taxon>
        <taxon>Ecdysozoa</taxon>
        <taxon>Arthropoda</taxon>
        <taxon>Hexapoda</taxon>
        <taxon>Insecta</taxon>
        <taxon>Pterygota</taxon>
        <taxon>Neoptera</taxon>
        <taxon>Endopterygota</taxon>
        <taxon>Diptera</taxon>
        <taxon>Brachycera</taxon>
        <taxon>Muscomorpha</taxon>
        <taxon>Ephydroidea</taxon>
        <taxon>Drosophilidae</taxon>
        <taxon>Drosophila</taxon>
        <taxon>Sophophora</taxon>
    </lineage>
</organism>
<gene>
    <name type="primary">Zasp52</name>
    <name evidence="14" type="synonym">Zasp</name>
    <name type="ORF">CG30084</name>
</gene>
<proteinExistence type="evidence at protein level"/>
<sequence length="2194" mass="238063">MAQPQLLQIKLSRFDAQPWGFRLQGGTDFAQPLLVQKVNAGSLSEQAGLQPGDAVVKINDVDVFNLRHKDAQDIVVRSGNNFVITVQRGGSTWRPHVTPTGNVPQPNSPYLQTVTKTSLAHKQQDSQHIGCGYNNAARPFSNGGDGGVKSIVNKQYNTPVGIYSDESIAETLSAQAEVLAGGVLGVNFKKNEKEYQGDRSEVLKFLREEETGQSTPAFGNSHYEHDAPQQLQQPQQQYNQHQQHYHQQQQQQQSSTTRHVSAPVNSPKPPSTGGLPTGQNICTECERLITGVFVRIKDKNLHVECFKCATCGTSLKNQGYYNFNNKLYCDIHAKQAAINNPPTGTEGYVPVPIKPNTKLSASTISSALNSHGYGGHSNGYSNGNSTPAPAPVASSQATATVATVAPSAATAATAAATPQAATATDSPAATASSSDNMSAYVADEPSSIYGQISAESVALAPPPPQPPTAGGGDQPFEYVTLTGNVIRSVQAPGKGACPSYKVNQGYARPFGAAAPKSPVSYPPQQQQQSPRPAPGGQNPYATLPRSNVGQQGGEAVEELQPEFEEEDCYEMDIEVALAASRQSQRGSSFTWPPPQDDSHLAPTAAPLYIPPPETQHVVVSNPVQQVPPLPPGGATARLDPQPVVGTSANGAPQWQSYSAPQLTTASARQLAEQESSSDSYTSTSTTTTTTSEEYQRMYAAQVQAYQMQEQSGSEFDYQVDYASTQDSVQDYPSGRRSAQECVDSLAVPLSTYKLVDMVREVTPSPVTTPTQTPAPAAPTTRRVVFNDEPEIKELPQLPAELETIPEASEAVEDREGLVIEQRCQILESERKFQPTPEIKIEIAPVRQIPPTKIPNPMPKEWINPMIRVLTTAPEVPFHLVECPFPRPCGDDFEAEAAAAEAAKTQEVPEPLPPQVSAAPPATVSVEPSPAPLRESPPRGSRLSQAMVTAPEFELKFAPPADQGIPLPEETEPYMPPPIDTKPYLREDYRPKSPFVSALTTAPDRPFEGHFDKDVPIHMIDLPTPKEHLSMCDALCTAPERGYTPLNPENAMHRVDEEQKQQELKKREFQVLDHEEELGIRPEPPQSVEYYETRRDQPRKSSAFAAMQAFQPSREPLSSNTVSNAGSVADTPRASIVSALKEETDLEYQKYLKAQQRNQKRLDYFHQKEEELSGLQGQQLTQLQRELSNQQQNLLSQQQLQQSKLLQLQQCVQSQELQQQVQHLTQKSQQQPPQANQQQQQQQQQRGTQQQQHSQVTQRTQQQQQQVPQQVTQQQQQEHSLLSQTTLAETQTLQANAQSQSSASYSSKATACSNSSSTVPPANTSTAFAPAPAPAPTSIPVRPSAIAVQSSYCSSQFDVHELIEETAEELEHSEVLFPPPSPLSHLTKQGKAVQSGLHKADSIPKYQRNWTVLPTQSPIRTPEPQELRENVPLAFVDAPKAPVTSDSSTVHRPIAQVAAPTTVVAPSREREKERRPQLSVPIIVEDRSGPVTMAFQPLDELVRPDQALTPTRPYTPSLTNKPAPIVPFYQTEEKLVFEECSATHARNYNELNASPFPDRTRSPAPGPPPNPLNAIRAPRMKEPETKSNILSVSGGPRLQTGSITTGQSYQGQLLAHSEQSSQSASQSYNQQPERITEQRVGNLNIQQREQSSQLQQQAQSQTQSQTRSQVGNTQIERRRKVTEEFERTQSAKTIEIRTGSQSVSQSKAQSQSISQAQTQAQSQSQNQSDTERRSSYGKTGFVASQAKRLSCMEEEISSLTSQSQAISARASALGEGCFPNLRSPTFDSKFPLKPAPAESIVPGYATVPAATKMLTAPPPGFLQQQQQQQQRSAFSGYQATTSSVQQSSFASSSKATTSSLSSSSASASASASVARSSQSLTQASAITTTTNNQATTAYRSSNGSITKPNLASRPSIASITAPGSASAPAPVPSAAPTKATAPFKAPIVPKSVIANAVNAAAPPAPAVFPPDLSDLNLNSNVDNSPGAGGKSAGAFGATSAPKRGRGILNKAAGPGVRIPLCNSCNVQIRGPFITALGRIWCPDHFICVNGNCRRPLQDIGFVEEKGDLYCEYCFEKYLAPTCSKCAGKIKGDCLNAIGKHFHPECFTCGQCGKIFGNRPFFLEDGNAYCEADWNELFTTKCFACGFPVEAGDRWVEALNHNYHSQCFNCTFCKQNLEGQSFYNKGGRPFCKNHAR</sequence>
<reference evidence="10 15" key="1">
    <citation type="journal article" date="2007" name="J. Cell Biol.">
        <title>Zasp is required for the assembly of functional integrin adhesion sites.</title>
        <authorList>
            <person name="Jani K."/>
            <person name="Schock F."/>
        </authorList>
    </citation>
    <scope>NUCLEOTIDE SEQUENCE [MRNA] (ISOFORMS E AND I)</scope>
    <scope>FUNCTION</scope>
    <scope>INTERACTION WITH ACTN</scope>
    <scope>SUBCELLULAR LOCATION</scope>
    <scope>TISSUE SPECIFICITY</scope>
    <scope>DEVELOPMENTAL STAGE</scope>
    <scope>DISRUPTION PHENOTYPE</scope>
</reference>
<reference evidence="14" key="2">
    <citation type="journal article" date="2000" name="Science">
        <title>The genome sequence of Drosophila melanogaster.</title>
        <authorList>
            <person name="Adams M.D."/>
            <person name="Celniker S.E."/>
            <person name="Holt R.A."/>
            <person name="Evans C.A."/>
            <person name="Gocayne J.D."/>
            <person name="Amanatides P.G."/>
            <person name="Scherer S.E."/>
            <person name="Li P.W."/>
            <person name="Hoskins R.A."/>
            <person name="Galle R.F."/>
            <person name="George R.A."/>
            <person name="Lewis S.E."/>
            <person name="Richards S."/>
            <person name="Ashburner M."/>
            <person name="Henderson S.N."/>
            <person name="Sutton G.G."/>
            <person name="Wortman J.R."/>
            <person name="Yandell M.D."/>
            <person name="Zhang Q."/>
            <person name="Chen L.X."/>
            <person name="Brandon R.C."/>
            <person name="Rogers Y.-H.C."/>
            <person name="Blazej R.G."/>
            <person name="Champe M."/>
            <person name="Pfeiffer B.D."/>
            <person name="Wan K.H."/>
            <person name="Doyle C."/>
            <person name="Baxter E.G."/>
            <person name="Helt G."/>
            <person name="Nelson C.R."/>
            <person name="Miklos G.L.G."/>
            <person name="Abril J.F."/>
            <person name="Agbayani A."/>
            <person name="An H.-J."/>
            <person name="Andrews-Pfannkoch C."/>
            <person name="Baldwin D."/>
            <person name="Ballew R.M."/>
            <person name="Basu A."/>
            <person name="Baxendale J."/>
            <person name="Bayraktaroglu L."/>
            <person name="Beasley E.M."/>
            <person name="Beeson K.Y."/>
            <person name="Benos P.V."/>
            <person name="Berman B.P."/>
            <person name="Bhandari D."/>
            <person name="Bolshakov S."/>
            <person name="Borkova D."/>
            <person name="Botchan M.R."/>
            <person name="Bouck J."/>
            <person name="Brokstein P."/>
            <person name="Brottier P."/>
            <person name="Burtis K.C."/>
            <person name="Busam D.A."/>
            <person name="Butler H."/>
            <person name="Cadieu E."/>
            <person name="Center A."/>
            <person name="Chandra I."/>
            <person name="Cherry J.M."/>
            <person name="Cawley S."/>
            <person name="Dahlke C."/>
            <person name="Davenport L.B."/>
            <person name="Davies P."/>
            <person name="de Pablos B."/>
            <person name="Delcher A."/>
            <person name="Deng Z."/>
            <person name="Mays A.D."/>
            <person name="Dew I."/>
            <person name="Dietz S.M."/>
            <person name="Dodson K."/>
            <person name="Doup L.E."/>
            <person name="Downes M."/>
            <person name="Dugan-Rocha S."/>
            <person name="Dunkov B.C."/>
            <person name="Dunn P."/>
            <person name="Durbin K.J."/>
            <person name="Evangelista C.C."/>
            <person name="Ferraz C."/>
            <person name="Ferriera S."/>
            <person name="Fleischmann W."/>
            <person name="Fosler C."/>
            <person name="Gabrielian A.E."/>
            <person name="Garg N.S."/>
            <person name="Gelbart W.M."/>
            <person name="Glasser K."/>
            <person name="Glodek A."/>
            <person name="Gong F."/>
            <person name="Gorrell J.H."/>
            <person name="Gu Z."/>
            <person name="Guan P."/>
            <person name="Harris M."/>
            <person name="Harris N.L."/>
            <person name="Harvey D.A."/>
            <person name="Heiman T.J."/>
            <person name="Hernandez J.R."/>
            <person name="Houck J."/>
            <person name="Hostin D."/>
            <person name="Houston K.A."/>
            <person name="Howland T.J."/>
            <person name="Wei M.-H."/>
            <person name="Ibegwam C."/>
            <person name="Jalali M."/>
            <person name="Kalush F."/>
            <person name="Karpen G.H."/>
            <person name="Ke Z."/>
            <person name="Kennison J.A."/>
            <person name="Ketchum K.A."/>
            <person name="Kimmel B.E."/>
            <person name="Kodira C.D."/>
            <person name="Kraft C.L."/>
            <person name="Kravitz S."/>
            <person name="Kulp D."/>
            <person name="Lai Z."/>
            <person name="Lasko P."/>
            <person name="Lei Y."/>
            <person name="Levitsky A.A."/>
            <person name="Li J.H."/>
            <person name="Li Z."/>
            <person name="Liang Y."/>
            <person name="Lin X."/>
            <person name="Liu X."/>
            <person name="Mattei B."/>
            <person name="McIntosh T.C."/>
            <person name="McLeod M.P."/>
            <person name="McPherson D."/>
            <person name="Merkulov G."/>
            <person name="Milshina N.V."/>
            <person name="Mobarry C."/>
            <person name="Morris J."/>
            <person name="Moshrefi A."/>
            <person name="Mount S.M."/>
            <person name="Moy M."/>
            <person name="Murphy B."/>
            <person name="Murphy L."/>
            <person name="Muzny D.M."/>
            <person name="Nelson D.L."/>
            <person name="Nelson D.R."/>
            <person name="Nelson K.A."/>
            <person name="Nixon K."/>
            <person name="Nusskern D.R."/>
            <person name="Pacleb J.M."/>
            <person name="Palazzolo M."/>
            <person name="Pittman G.S."/>
            <person name="Pan S."/>
            <person name="Pollard J."/>
            <person name="Puri V."/>
            <person name="Reese M.G."/>
            <person name="Reinert K."/>
            <person name="Remington K."/>
            <person name="Saunders R.D.C."/>
            <person name="Scheeler F."/>
            <person name="Shen H."/>
            <person name="Shue B.C."/>
            <person name="Siden-Kiamos I."/>
            <person name="Simpson M."/>
            <person name="Skupski M.P."/>
            <person name="Smith T.J."/>
            <person name="Spier E."/>
            <person name="Spradling A.C."/>
            <person name="Stapleton M."/>
            <person name="Strong R."/>
            <person name="Sun E."/>
            <person name="Svirskas R."/>
            <person name="Tector C."/>
            <person name="Turner R."/>
            <person name="Venter E."/>
            <person name="Wang A.H."/>
            <person name="Wang X."/>
            <person name="Wang Z.-Y."/>
            <person name="Wassarman D.A."/>
            <person name="Weinstock G.M."/>
            <person name="Weissenbach J."/>
            <person name="Williams S.M."/>
            <person name="Woodage T."/>
            <person name="Worley K.C."/>
            <person name="Wu D."/>
            <person name="Yang S."/>
            <person name="Yao Q.A."/>
            <person name="Ye J."/>
            <person name="Yeh R.-F."/>
            <person name="Zaveri J.S."/>
            <person name="Zhan M."/>
            <person name="Zhang G."/>
            <person name="Zhao Q."/>
            <person name="Zheng L."/>
            <person name="Zheng X.H."/>
            <person name="Zhong F.N."/>
            <person name="Zhong W."/>
            <person name="Zhou X."/>
            <person name="Zhu S.C."/>
            <person name="Zhu X."/>
            <person name="Smith H.O."/>
            <person name="Gibbs R.A."/>
            <person name="Myers E.W."/>
            <person name="Rubin G.M."/>
            <person name="Venter J.C."/>
        </authorList>
    </citation>
    <scope>NUCLEOTIDE SEQUENCE [LARGE SCALE GENOMIC DNA]</scope>
    <source>
        <strain>Berkeley</strain>
    </source>
</reference>
<reference evidence="10 14" key="3">
    <citation type="journal article" date="2002" name="Genome Biol.">
        <title>Annotation of the Drosophila melanogaster euchromatic genome: a systematic review.</title>
        <authorList>
            <person name="Misra S."/>
            <person name="Crosby M.A."/>
            <person name="Mungall C.J."/>
            <person name="Matthews B.B."/>
            <person name="Campbell K.S."/>
            <person name="Hradecky P."/>
            <person name="Huang Y."/>
            <person name="Kaminker J.S."/>
            <person name="Millburn G.H."/>
            <person name="Prochnik S.E."/>
            <person name="Smith C.D."/>
            <person name="Tupy J.L."/>
            <person name="Whitfield E.J."/>
            <person name="Bayraktaroglu L."/>
            <person name="Berman B.P."/>
            <person name="Bettencourt B.R."/>
            <person name="Celniker S.E."/>
            <person name="de Grey A.D.N.J."/>
            <person name="Drysdale R.A."/>
            <person name="Harris N.L."/>
            <person name="Richter J."/>
            <person name="Russo S."/>
            <person name="Schroeder A.J."/>
            <person name="Shu S.Q."/>
            <person name="Stapleton M."/>
            <person name="Yamada C."/>
            <person name="Ashburner M."/>
            <person name="Gelbart W.M."/>
            <person name="Rubin G.M."/>
            <person name="Lewis S.E."/>
        </authorList>
    </citation>
    <scope>GENOME REANNOTATION</scope>
    <scope>ALTERNATIVE SPLICING</scope>
    <source>
        <strain>Berkeley</strain>
    </source>
</reference>
<reference evidence="10 11" key="4">
    <citation type="journal article" date="2002" name="Genome Biol.">
        <title>A Drosophila full-length cDNA resource.</title>
        <authorList>
            <person name="Stapleton M."/>
            <person name="Carlson J.W."/>
            <person name="Brokstein P."/>
            <person name="Yu C."/>
            <person name="Champe M."/>
            <person name="George R.A."/>
            <person name="Guarin H."/>
            <person name="Kronmiller B."/>
            <person name="Pacleb J.M."/>
            <person name="Park S."/>
            <person name="Wan K.H."/>
            <person name="Rubin G.M."/>
            <person name="Celniker S.E."/>
        </authorList>
    </citation>
    <scope>NUCLEOTIDE SEQUENCE [LARGE SCALE MRNA] (ISOFORM E)</scope>
    <source>
        <strain evidence="11">Berkeley</strain>
        <tissue evidence="4">Head</tissue>
    </source>
</reference>
<reference evidence="10 13" key="5">
    <citation type="submission" date="2005-05" db="EMBL/GenBank/DDBJ databases">
        <authorList>
            <person name="Stapleton M."/>
            <person name="Brokstein P."/>
            <person name="Hong L."/>
            <person name="Agbayani A."/>
            <person name="Carlson J.W."/>
            <person name="Champe M."/>
            <person name="Chavez C."/>
            <person name="Dorsett V."/>
            <person name="Dresnek D."/>
            <person name="Farfan D."/>
            <person name="Frise E."/>
            <person name="George R.A."/>
            <person name="Gonzalez M."/>
            <person name="Guarin H."/>
            <person name="Kronmiller B."/>
            <person name="Li P.W."/>
            <person name="Liao G."/>
            <person name="Miranda A."/>
            <person name="Mungall C.J."/>
            <person name="Nunoo J."/>
            <person name="Pacleb J.M."/>
            <person name="Paragas V."/>
            <person name="Park S."/>
            <person name="Patel S."/>
            <person name="Phouanenavong S."/>
            <person name="Wan K.H."/>
            <person name="Yu C."/>
            <person name="Lewis S.E."/>
            <person name="Rubin G.M."/>
            <person name="Celniker S.E."/>
        </authorList>
    </citation>
    <scope>NUCLEOTIDE SEQUENCE [LARGE SCALE MRNA] (ISOFORM G)</scope>
    <scope>NUCLEOTIDE SEQUENCE [LARGE SCALE MRNA] OF 548-2194 (ISOFORMS C/E/G)</scope>
    <source>
        <strain evidence="12">Berkeley</strain>
        <tissue>Larva</tissue>
        <tissue>Pupae</tissue>
    </source>
</reference>
<keyword id="KW-0025">Alternative splicing</keyword>
<keyword id="KW-0963">Cytoplasm</keyword>
<keyword id="KW-0206">Cytoskeleton</keyword>
<keyword id="KW-0440">LIM domain</keyword>
<keyword id="KW-0479">Metal-binding</keyword>
<keyword id="KW-1185">Reference proteome</keyword>
<keyword id="KW-0677">Repeat</keyword>
<keyword id="KW-0862">Zinc</keyword>
<dbReference type="EMBL" id="EF221635">
    <property type="protein sequence ID" value="ABQ18241.1"/>
    <property type="molecule type" value="mRNA"/>
</dbReference>
<dbReference type="EMBL" id="AE013599">
    <property type="protein sequence ID" value="AAF58107.5"/>
    <property type="molecule type" value="Genomic_DNA"/>
</dbReference>
<dbReference type="EMBL" id="AE013599">
    <property type="protein sequence ID" value="AAM70963.2"/>
    <property type="molecule type" value="Genomic_DNA"/>
</dbReference>
<dbReference type="EMBL" id="AE013599">
    <property type="protein sequence ID" value="AAZ52805.1"/>
    <property type="molecule type" value="Genomic_DNA"/>
</dbReference>
<dbReference type="EMBL" id="AE013599">
    <property type="protein sequence ID" value="AAZ52806.2"/>
    <property type="molecule type" value="Genomic_DNA"/>
</dbReference>
<dbReference type="EMBL" id="AE013599">
    <property type="protein sequence ID" value="ABI31098.1"/>
    <property type="molecule type" value="Genomic_DNA"/>
</dbReference>
<dbReference type="EMBL" id="BT001752">
    <property type="protein sequence ID" value="AAN71507.1"/>
    <property type="molecule type" value="mRNA"/>
</dbReference>
<dbReference type="EMBL" id="BT003565">
    <property type="protein sequence ID" value="AAO39569.1"/>
    <property type="status" value="ALT_SEQ"/>
    <property type="molecule type" value="mRNA"/>
</dbReference>
<dbReference type="EMBL" id="BT011386">
    <property type="protein sequence ID" value="AAR96178.1"/>
    <property type="molecule type" value="mRNA"/>
</dbReference>
<dbReference type="EMBL" id="BT022171">
    <property type="protein sequence ID" value="AAY51565.1"/>
    <property type="molecule type" value="mRNA"/>
</dbReference>
<dbReference type="RefSeq" id="NP_001027420.2">
    <molecule id="A1ZA47-1"/>
    <property type="nucleotide sequence ID" value="NM_001032249.4"/>
</dbReference>
<dbReference type="RefSeq" id="NP_001027421.1">
    <molecule id="A1ZA47-4"/>
    <property type="nucleotide sequence ID" value="NM_001032250.3"/>
</dbReference>
<dbReference type="RefSeq" id="NP_001036551.1">
    <molecule id="A1ZA47-5"/>
    <property type="nucleotide sequence ID" value="NM_001043086.3"/>
</dbReference>
<dbReference type="RefSeq" id="NP_611058.4">
    <property type="nucleotide sequence ID" value="NM_137214.5"/>
</dbReference>
<dbReference type="RefSeq" id="NP_665700.2">
    <molecule id="A1ZA47-3"/>
    <property type="nucleotide sequence ID" value="NM_145757.3"/>
</dbReference>
<dbReference type="BioGRID" id="62468">
    <property type="interactions" value="40"/>
</dbReference>
<dbReference type="FunCoup" id="A1ZA47">
    <property type="interactions" value="3"/>
</dbReference>
<dbReference type="IntAct" id="A1ZA47">
    <property type="interactions" value="40"/>
</dbReference>
<dbReference type="STRING" id="7227.FBpp0099801"/>
<dbReference type="GlyGen" id="A1ZA47">
    <property type="glycosylation" value="3 sites, 1 O-linked glycan (1 site)"/>
</dbReference>
<dbReference type="PaxDb" id="7227-FBpp0099801"/>
<dbReference type="DNASU" id="36740"/>
<dbReference type="EnsemblMetazoa" id="FBtr0087315">
    <molecule id="A1ZA47-3"/>
    <property type="protein sequence ID" value="FBpp0086449"/>
    <property type="gene ID" value="FBgn0265991"/>
</dbReference>
<dbReference type="EnsemblMetazoa" id="FBtr0100387">
    <molecule id="A1ZA47-4"/>
    <property type="protein sequence ID" value="FBpp0099800"/>
    <property type="gene ID" value="FBgn0265991"/>
</dbReference>
<dbReference type="EnsemblMetazoa" id="FBtr0100388">
    <molecule id="A1ZA47-1"/>
    <property type="protein sequence ID" value="FBpp0099801"/>
    <property type="gene ID" value="FBgn0265991"/>
</dbReference>
<dbReference type="EnsemblMetazoa" id="FBtr0111048">
    <molecule id="A1ZA47-5"/>
    <property type="protein sequence ID" value="FBpp0110340"/>
    <property type="gene ID" value="FBgn0265991"/>
</dbReference>
<dbReference type="GeneID" id="36740"/>
<dbReference type="KEGG" id="dme:Dmel_CG30084"/>
<dbReference type="UCSC" id="CG30084-RA">
    <property type="organism name" value="d. melanogaster"/>
</dbReference>
<dbReference type="UCSC" id="CG30084-RC">
    <property type="organism name" value="d. melanogaster"/>
</dbReference>
<dbReference type="UCSC" id="CG30084-RE">
    <property type="organism name" value="d. melanogaster"/>
</dbReference>
<dbReference type="UCSC" id="CG30084-RF">
    <molecule id="A1ZA47-1"/>
    <property type="organism name" value="d. melanogaster"/>
</dbReference>
<dbReference type="UCSC" id="CG30084-RG">
    <property type="organism name" value="d. melanogaster"/>
</dbReference>
<dbReference type="UCSC" id="CG30084-RH">
    <property type="organism name" value="d. melanogaster"/>
</dbReference>
<dbReference type="AGR" id="FB:FBgn0265991"/>
<dbReference type="CTD" id="36740"/>
<dbReference type="FlyBase" id="FBgn0265991">
    <property type="gene designation" value="Zasp52"/>
</dbReference>
<dbReference type="VEuPathDB" id="VectorBase:FBgn0265991"/>
<dbReference type="eggNOG" id="KOG1703">
    <property type="taxonomic scope" value="Eukaryota"/>
</dbReference>
<dbReference type="GeneTree" id="ENSGT00940000168514"/>
<dbReference type="InParanoid" id="A1ZA47"/>
<dbReference type="OMA" id="HVAFNDE"/>
<dbReference type="OrthoDB" id="5911912at2759"/>
<dbReference type="PhylomeDB" id="A1ZA47"/>
<dbReference type="SignaLink" id="A1ZA47"/>
<dbReference type="BioGRID-ORCS" id="36740">
    <property type="hits" value="0 hits in 3 CRISPR screens"/>
</dbReference>
<dbReference type="ChiTaRS" id="Zasp52">
    <property type="organism name" value="fly"/>
</dbReference>
<dbReference type="GenomeRNAi" id="36740"/>
<dbReference type="PRO" id="PR:A1ZA47"/>
<dbReference type="Proteomes" id="UP000000803">
    <property type="component" value="Chromosome 2R"/>
</dbReference>
<dbReference type="Bgee" id="FBgn0265991">
    <property type="expression patterns" value="Expressed in indirect flight muscle cell (Drosophila) in post-embryonic organism and 175 other cell types or tissues"/>
</dbReference>
<dbReference type="ExpressionAtlas" id="A1ZA47">
    <property type="expression patterns" value="baseline and differential"/>
</dbReference>
<dbReference type="GO" id="GO:0015629">
    <property type="term" value="C:actin cytoskeleton"/>
    <property type="evidence" value="ECO:0000314"/>
    <property type="project" value="UniProtKB"/>
</dbReference>
<dbReference type="GO" id="GO:0005912">
    <property type="term" value="C:adherens junction"/>
    <property type="evidence" value="ECO:0000318"/>
    <property type="project" value="GO_Central"/>
</dbReference>
<dbReference type="GO" id="GO:0045177">
    <property type="term" value="C:apical part of cell"/>
    <property type="evidence" value="ECO:0000314"/>
    <property type="project" value="FlyBase"/>
</dbReference>
<dbReference type="GO" id="GO:0045178">
    <property type="term" value="C:basal part of cell"/>
    <property type="evidence" value="ECO:0000314"/>
    <property type="project" value="FlyBase"/>
</dbReference>
<dbReference type="GO" id="GO:0016323">
    <property type="term" value="C:basolateral plasma membrane"/>
    <property type="evidence" value="ECO:0000314"/>
    <property type="project" value="FlyBase"/>
</dbReference>
<dbReference type="GO" id="GO:0031252">
    <property type="term" value="C:cell leading edge"/>
    <property type="evidence" value="ECO:0000314"/>
    <property type="project" value="FlyBase"/>
</dbReference>
<dbReference type="GO" id="GO:0031941">
    <property type="term" value="C:filamentous actin"/>
    <property type="evidence" value="ECO:0000318"/>
    <property type="project" value="GO_Central"/>
</dbReference>
<dbReference type="GO" id="GO:0005925">
    <property type="term" value="C:focal adhesion"/>
    <property type="evidence" value="ECO:0000314"/>
    <property type="project" value="FlyBase"/>
</dbReference>
<dbReference type="GO" id="GO:0005927">
    <property type="term" value="C:muscle tendon junction"/>
    <property type="evidence" value="ECO:0000314"/>
    <property type="project" value="FlyBase"/>
</dbReference>
<dbReference type="GO" id="GO:0001725">
    <property type="term" value="C:stress fiber"/>
    <property type="evidence" value="ECO:0000314"/>
    <property type="project" value="FlyBase"/>
</dbReference>
<dbReference type="GO" id="GO:0030018">
    <property type="term" value="C:Z disc"/>
    <property type="evidence" value="ECO:0000314"/>
    <property type="project" value="FlyBase"/>
</dbReference>
<dbReference type="GO" id="GO:0005915">
    <property type="term" value="C:zonula adherens"/>
    <property type="evidence" value="ECO:0000314"/>
    <property type="project" value="FlyBase"/>
</dbReference>
<dbReference type="GO" id="GO:0003779">
    <property type="term" value="F:actin binding"/>
    <property type="evidence" value="ECO:0000353"/>
    <property type="project" value="UniProtKB"/>
</dbReference>
<dbReference type="GO" id="GO:0042805">
    <property type="term" value="F:actinin binding"/>
    <property type="evidence" value="ECO:0000353"/>
    <property type="project" value="FlyBase"/>
</dbReference>
<dbReference type="GO" id="GO:0046872">
    <property type="term" value="F:metal ion binding"/>
    <property type="evidence" value="ECO:0007669"/>
    <property type="project" value="UniProtKB-KW"/>
</dbReference>
<dbReference type="GO" id="GO:0051371">
    <property type="term" value="F:muscle alpha-actinin binding"/>
    <property type="evidence" value="ECO:0000315"/>
    <property type="project" value="UniProtKB"/>
</dbReference>
<dbReference type="GO" id="GO:0030036">
    <property type="term" value="P:actin cytoskeleton organization"/>
    <property type="evidence" value="ECO:0000318"/>
    <property type="project" value="GO_Central"/>
</dbReference>
<dbReference type="GO" id="GO:0061061">
    <property type="term" value="P:muscle structure development"/>
    <property type="evidence" value="ECO:0000315"/>
    <property type="project" value="FlyBase"/>
</dbReference>
<dbReference type="GO" id="GO:0030239">
    <property type="term" value="P:myofibril assembly"/>
    <property type="evidence" value="ECO:0000315"/>
    <property type="project" value="FlyBase"/>
</dbReference>
<dbReference type="GO" id="GO:0001952">
    <property type="term" value="P:regulation of cell-matrix adhesion"/>
    <property type="evidence" value="ECO:0000315"/>
    <property type="project" value="UniProtKB"/>
</dbReference>
<dbReference type="CDD" id="cd08368">
    <property type="entry name" value="LIM"/>
    <property type="match status" value="1"/>
</dbReference>
<dbReference type="CDD" id="cd09455">
    <property type="entry name" value="LIM1_Enigma_like_1"/>
    <property type="match status" value="1"/>
</dbReference>
<dbReference type="CDD" id="cd09461">
    <property type="entry name" value="LIM3_Enigma_like_1"/>
    <property type="match status" value="1"/>
</dbReference>
<dbReference type="CDD" id="cd09360">
    <property type="entry name" value="LIM_ALP_like"/>
    <property type="match status" value="1"/>
</dbReference>
<dbReference type="CDD" id="cd23068">
    <property type="entry name" value="PDZ_ZASP52-like"/>
    <property type="match status" value="1"/>
</dbReference>
<dbReference type="FunFam" id="2.10.110.10:FF:000060">
    <property type="entry name" value="Uncharacterized protein, isoform Z"/>
    <property type="match status" value="1"/>
</dbReference>
<dbReference type="FunFam" id="2.10.110.10:FF:000067">
    <property type="entry name" value="Uncharacterized protein, isoform Z"/>
    <property type="match status" value="1"/>
</dbReference>
<dbReference type="FunFam" id="2.10.110.10:FF:000069">
    <property type="entry name" value="Uncharacterized protein, isoform Z"/>
    <property type="match status" value="1"/>
</dbReference>
<dbReference type="FunFam" id="2.10.110.10:FF:000073">
    <property type="entry name" value="Uncharacterized protein, isoform Z"/>
    <property type="match status" value="1"/>
</dbReference>
<dbReference type="FunFam" id="2.30.42.10:FF:000118">
    <property type="entry name" value="Uncharacterized protein, isoform Z"/>
    <property type="match status" value="1"/>
</dbReference>
<dbReference type="Gene3D" id="2.30.42.10">
    <property type="match status" value="1"/>
</dbReference>
<dbReference type="Gene3D" id="2.10.110.10">
    <property type="entry name" value="Cysteine Rich Protein"/>
    <property type="match status" value="4"/>
</dbReference>
<dbReference type="InterPro" id="IPR031847">
    <property type="entry name" value="PDLI1-4/Zasp-like_mid"/>
</dbReference>
<dbReference type="InterPro" id="IPR001478">
    <property type="entry name" value="PDZ"/>
</dbReference>
<dbReference type="InterPro" id="IPR050604">
    <property type="entry name" value="PDZ-LIM_domain"/>
</dbReference>
<dbReference type="InterPro" id="IPR036034">
    <property type="entry name" value="PDZ_sf"/>
</dbReference>
<dbReference type="InterPro" id="IPR006643">
    <property type="entry name" value="Zasp-like_motif"/>
</dbReference>
<dbReference type="InterPro" id="IPR001781">
    <property type="entry name" value="Znf_LIM"/>
</dbReference>
<dbReference type="PANTHER" id="PTHR24214:SF61">
    <property type="entry name" value="PDZ AND LIM DOMAIN PROTEIN 3-LIKE"/>
    <property type="match status" value="1"/>
</dbReference>
<dbReference type="PANTHER" id="PTHR24214">
    <property type="entry name" value="PDZ AND LIM DOMAIN PROTEIN ZASP"/>
    <property type="match status" value="1"/>
</dbReference>
<dbReference type="Pfam" id="PF15936">
    <property type="entry name" value="DUF4749"/>
    <property type="match status" value="1"/>
</dbReference>
<dbReference type="Pfam" id="PF00412">
    <property type="entry name" value="LIM"/>
    <property type="match status" value="4"/>
</dbReference>
<dbReference type="Pfam" id="PF00595">
    <property type="entry name" value="PDZ"/>
    <property type="match status" value="1"/>
</dbReference>
<dbReference type="SMART" id="SM00132">
    <property type="entry name" value="LIM"/>
    <property type="match status" value="4"/>
</dbReference>
<dbReference type="SMART" id="SM00228">
    <property type="entry name" value="PDZ"/>
    <property type="match status" value="1"/>
</dbReference>
<dbReference type="SMART" id="SM00735">
    <property type="entry name" value="ZM"/>
    <property type="match status" value="1"/>
</dbReference>
<dbReference type="SUPFAM" id="SSF57716">
    <property type="entry name" value="Glucocorticoid receptor-like (DNA-binding domain)"/>
    <property type="match status" value="5"/>
</dbReference>
<dbReference type="SUPFAM" id="SSF50156">
    <property type="entry name" value="PDZ domain-like"/>
    <property type="match status" value="1"/>
</dbReference>
<dbReference type="PROSITE" id="PS00478">
    <property type="entry name" value="LIM_DOMAIN_1"/>
    <property type="match status" value="2"/>
</dbReference>
<dbReference type="PROSITE" id="PS50023">
    <property type="entry name" value="LIM_DOMAIN_2"/>
    <property type="match status" value="4"/>
</dbReference>
<dbReference type="PROSITE" id="PS50106">
    <property type="entry name" value="PDZ"/>
    <property type="match status" value="1"/>
</dbReference>
<name>ZASP_DROME</name>
<protein>
    <recommendedName>
        <fullName>PDZ and LIM domain protein Zasp</fullName>
    </recommendedName>
    <alternativeName>
        <fullName evidence="8">Z band alternatively spliced PDZ-motif protein</fullName>
    </alternativeName>
</protein>
<evidence type="ECO:0000255" key="1">
    <source>
        <dbReference type="PROSITE-ProRule" id="PRU00125"/>
    </source>
</evidence>
<evidence type="ECO:0000255" key="2">
    <source>
        <dbReference type="PROSITE-ProRule" id="PRU00143"/>
    </source>
</evidence>
<evidence type="ECO:0000256" key="3">
    <source>
        <dbReference type="SAM" id="MobiDB-lite"/>
    </source>
</evidence>
<evidence type="ECO:0000269" key="4">
    <source>
    </source>
</evidence>
<evidence type="ECO:0000269" key="5">
    <source>
    </source>
</evidence>
<evidence type="ECO:0000303" key="6">
    <source>
    </source>
</evidence>
<evidence type="ECO:0000303" key="7">
    <source>
    </source>
</evidence>
<evidence type="ECO:0000303" key="8">
    <source>
    </source>
</evidence>
<evidence type="ECO:0000303" key="9">
    <source ref="5"/>
</evidence>
<evidence type="ECO:0000305" key="10"/>
<evidence type="ECO:0000312" key="11">
    <source>
        <dbReference type="EMBL" id="AAN71507.1"/>
    </source>
</evidence>
<evidence type="ECO:0000312" key="12">
    <source>
        <dbReference type="EMBL" id="AAO39569.1"/>
    </source>
</evidence>
<evidence type="ECO:0000312" key="13">
    <source>
        <dbReference type="EMBL" id="AAY51565.1"/>
    </source>
</evidence>
<evidence type="ECO:0000312" key="14">
    <source>
        <dbReference type="EMBL" id="AAZ52806.2"/>
    </source>
</evidence>
<evidence type="ECO:0000312" key="15">
    <source>
        <dbReference type="EMBL" id="ABQ18241.1"/>
    </source>
</evidence>
<evidence type="ECO:0000312" key="16">
    <source>
        <dbReference type="FlyBase" id="FBgn0265991"/>
    </source>
</evidence>
<comment type="function">
    <text evidence="5">Regulator of cell matrix adhesion having two related functions, one upstream of Actn organizing the Z line and the other downstream of integrins regulating assembly of integrin adhesion sites. Also required for the formation of myotendinous junctions in muscles.</text>
</comment>
<comment type="subunit">
    <text evidence="5">Interacts with alpha-actinin (Actn).</text>
</comment>
<comment type="subcellular location">
    <subcellularLocation>
        <location evidence="5">Cytoplasm</location>
        <location evidence="5">Cytoskeleton</location>
    </subcellularLocation>
    <text evidence="5">Regulates or strengthens the link of integrins to the actin cytoskeleton.</text>
</comment>
<comment type="alternative products">
    <event type="alternative splicing"/>
    <isoform>
        <id>A1ZA47-1</id>
        <name evidence="16">F</name>
        <sequence type="displayed"/>
    </isoform>
    <isoform>
        <id>A1ZA47-3</id>
        <name evidence="16">C</name>
        <sequence type="described" ref="VSP_040045 VSP_040050 VSP_040052"/>
    </isoform>
    <isoform>
        <id>A1ZA47-4</id>
        <name evidence="16">E</name>
        <name evidence="8">Enigma</name>
        <sequence type="described" ref="VSP_040043 VSP_040046 VSP_040050 VSP_040052"/>
    </isoform>
    <isoform>
        <id>A1ZA47-5</id>
        <name evidence="16">G</name>
        <sequence type="described" ref="VSP_040043 VSP_040050 VSP_040052"/>
    </isoform>
    <isoform>
        <id>A1ZA47-7</id>
        <name evidence="15">I</name>
        <name evidence="8">Alp</name>
        <sequence type="described" ref="VSP_040046 VSP_040048 VSP_040051"/>
    </isoform>
</comment>
<comment type="tissue specificity">
    <text evidence="5">Expression is first detected in the proctodeum and the midgut primordium. In stage 11 embryos, expression is predominant in the leading edge of epidermal cells adjacent to the amnioserosa. Stage 12 embryos exhibit expression in the midgut and the leading edge. Expressed in several rows of germ band cells next to the leading edge at stage 14. Strong expression is visible in the midgut and pharyngeal muscles of stage 17 embryos. Also expressed in somatic muscles and visceral mesoderm. Colocalizes with mys (beta PS integrin) in myotendinous junctions and with Actn in muscle Z lines.</text>
</comment>
<comment type="developmental stage">
    <text evidence="5">Expressed both maternally and zygotically.</text>
</comment>
<comment type="disruption phenotype">
    <text evidence="5">Fails to form the muscle Z line. At the myotendinous junction, muscles detach with the onset of contractility.</text>
</comment>
<comment type="sequence caution" evidence="10">
    <conflict type="miscellaneous discrepancy">
        <sequence resource="EMBL-CDS" id="AAO39569"/>
    </conflict>
    <text>Intron retention.</text>
</comment>